<keyword id="KW-0028">Amino-acid biosynthesis</keyword>
<keyword id="KW-0963">Cytoplasm</keyword>
<keyword id="KW-0368">Histidine biosynthesis</keyword>
<keyword id="KW-0413">Isomerase</keyword>
<evidence type="ECO:0000255" key="1">
    <source>
        <dbReference type="HAMAP-Rule" id="MF_01014"/>
    </source>
</evidence>
<accession>B8HY50</accession>
<feature type="chain" id="PRO_1000148966" description="1-(5-phosphoribosyl)-5-[(5-phosphoribosylamino)methylideneamino] imidazole-4-carboxamide isomerase">
    <location>
        <begin position="1"/>
        <end position="257"/>
    </location>
</feature>
<feature type="active site" description="Proton acceptor" evidence="1">
    <location>
        <position position="8"/>
    </location>
</feature>
<feature type="active site" description="Proton donor" evidence="1">
    <location>
        <position position="129"/>
    </location>
</feature>
<sequence>MDIIPAIDLLGGRCVRLYQGDYNQAEVFDTDPVGMARRWLSQGATRLHLVDLDGAKTGEPVNQAAMAAIVQDLAIPVQVGGGVRSRQRVVELLDLGVDRVILGTVAIEQPQLVEALCAEFPGRILIGIDARDGKVATRGWLETSTVQATDLARTVEKAGAAGIIYTDIHRDGTLQGPNLEALRQLASEVNLPIIASGGVSSIADLLNLFVLSTSGVTGVIIGKALYSGDITLTDAIRAVGQGRWQDVPPDLGFSTFA</sequence>
<reference key="1">
    <citation type="journal article" date="2011" name="MBio">
        <title>Novel metabolic attributes of the genus Cyanothece, comprising a group of unicellular nitrogen-fixing Cyanobacteria.</title>
        <authorList>
            <person name="Bandyopadhyay A."/>
            <person name="Elvitigala T."/>
            <person name="Welsh E."/>
            <person name="Stockel J."/>
            <person name="Liberton M."/>
            <person name="Min H."/>
            <person name="Sherman L.A."/>
            <person name="Pakrasi H.B."/>
        </authorList>
    </citation>
    <scope>NUCLEOTIDE SEQUENCE [LARGE SCALE GENOMIC DNA]</scope>
    <source>
        <strain>PCC 7425 / ATCC 29141</strain>
    </source>
</reference>
<comment type="catalytic activity">
    <reaction evidence="1">
        <text>1-(5-phospho-beta-D-ribosyl)-5-[(5-phospho-beta-D-ribosylamino)methylideneamino]imidazole-4-carboxamide = 5-[(5-phospho-1-deoxy-D-ribulos-1-ylimino)methylamino]-1-(5-phospho-beta-D-ribosyl)imidazole-4-carboxamide</text>
        <dbReference type="Rhea" id="RHEA:15469"/>
        <dbReference type="ChEBI" id="CHEBI:58435"/>
        <dbReference type="ChEBI" id="CHEBI:58525"/>
        <dbReference type="EC" id="5.3.1.16"/>
    </reaction>
</comment>
<comment type="pathway">
    <text evidence="1">Amino-acid biosynthesis; L-histidine biosynthesis; L-histidine from 5-phospho-alpha-D-ribose 1-diphosphate: step 4/9.</text>
</comment>
<comment type="subcellular location">
    <subcellularLocation>
        <location evidence="1">Cytoplasm</location>
    </subcellularLocation>
</comment>
<comment type="similarity">
    <text evidence="1">Belongs to the HisA/HisF family.</text>
</comment>
<protein>
    <recommendedName>
        <fullName evidence="1">1-(5-phosphoribosyl)-5-[(5-phosphoribosylamino)methylideneamino] imidazole-4-carboxamide isomerase</fullName>
        <ecNumber evidence="1">5.3.1.16</ecNumber>
    </recommendedName>
    <alternativeName>
        <fullName evidence="1">Phosphoribosylformimino-5-aminoimidazole carboxamide ribotide isomerase</fullName>
    </alternativeName>
</protein>
<dbReference type="EC" id="5.3.1.16" evidence="1"/>
<dbReference type="EMBL" id="CP001344">
    <property type="protein sequence ID" value="ACL44853.1"/>
    <property type="molecule type" value="Genomic_DNA"/>
</dbReference>
<dbReference type="SMR" id="B8HY50"/>
<dbReference type="STRING" id="395961.Cyan7425_2496"/>
<dbReference type="KEGG" id="cyn:Cyan7425_2496"/>
<dbReference type="eggNOG" id="COG0106">
    <property type="taxonomic scope" value="Bacteria"/>
</dbReference>
<dbReference type="HOGENOM" id="CLU_048577_1_1_3"/>
<dbReference type="OrthoDB" id="9807749at2"/>
<dbReference type="UniPathway" id="UPA00031">
    <property type="reaction ID" value="UER00009"/>
</dbReference>
<dbReference type="GO" id="GO:0005737">
    <property type="term" value="C:cytoplasm"/>
    <property type="evidence" value="ECO:0007669"/>
    <property type="project" value="UniProtKB-SubCell"/>
</dbReference>
<dbReference type="GO" id="GO:0003949">
    <property type="term" value="F:1-(5-phosphoribosyl)-5-[(5-phosphoribosylamino)methylideneamino]imidazole-4-carboxamide isomerase activity"/>
    <property type="evidence" value="ECO:0007669"/>
    <property type="project" value="UniProtKB-UniRule"/>
</dbReference>
<dbReference type="GO" id="GO:0000105">
    <property type="term" value="P:L-histidine biosynthetic process"/>
    <property type="evidence" value="ECO:0007669"/>
    <property type="project" value="UniProtKB-UniRule"/>
</dbReference>
<dbReference type="GO" id="GO:0000162">
    <property type="term" value="P:L-tryptophan biosynthetic process"/>
    <property type="evidence" value="ECO:0007669"/>
    <property type="project" value="TreeGrafter"/>
</dbReference>
<dbReference type="CDD" id="cd04732">
    <property type="entry name" value="HisA"/>
    <property type="match status" value="1"/>
</dbReference>
<dbReference type="FunFam" id="3.20.20.70:FF:000009">
    <property type="entry name" value="1-(5-phosphoribosyl)-5-[(5-phosphoribosylamino)methylideneamino] imidazole-4-carboxamide isomerase"/>
    <property type="match status" value="1"/>
</dbReference>
<dbReference type="Gene3D" id="3.20.20.70">
    <property type="entry name" value="Aldolase class I"/>
    <property type="match status" value="1"/>
</dbReference>
<dbReference type="HAMAP" id="MF_01014">
    <property type="entry name" value="HisA"/>
    <property type="match status" value="1"/>
</dbReference>
<dbReference type="InterPro" id="IPR013785">
    <property type="entry name" value="Aldolase_TIM"/>
</dbReference>
<dbReference type="InterPro" id="IPR006062">
    <property type="entry name" value="His_biosynth"/>
</dbReference>
<dbReference type="InterPro" id="IPR006063">
    <property type="entry name" value="HisA_bact_arch"/>
</dbReference>
<dbReference type="InterPro" id="IPR044524">
    <property type="entry name" value="Isoase_HisA-like"/>
</dbReference>
<dbReference type="InterPro" id="IPR023016">
    <property type="entry name" value="Isoase_HisA-like_bact"/>
</dbReference>
<dbReference type="InterPro" id="IPR011060">
    <property type="entry name" value="RibuloseP-bd_barrel"/>
</dbReference>
<dbReference type="NCBIfam" id="TIGR00007">
    <property type="entry name" value="1-(5-phosphoribosyl)-5-[(5-phosphoribosylamino)methylideneamino]imidazole-4-carboxamide isomerase"/>
    <property type="match status" value="1"/>
</dbReference>
<dbReference type="NCBIfam" id="NF010112">
    <property type="entry name" value="PRK13585.1"/>
    <property type="match status" value="1"/>
</dbReference>
<dbReference type="PANTHER" id="PTHR43090">
    <property type="entry name" value="1-(5-PHOSPHORIBOSYL)-5-[(5-PHOSPHORIBOSYLAMINO)METHYLIDENEAMINO] IMIDAZOLE-4-CARBOXAMIDE ISOMERASE"/>
    <property type="match status" value="1"/>
</dbReference>
<dbReference type="PANTHER" id="PTHR43090:SF2">
    <property type="entry name" value="1-(5-PHOSPHORIBOSYL)-5-[(5-PHOSPHORIBOSYLAMINO)METHYLIDENEAMINO] IMIDAZOLE-4-CARBOXAMIDE ISOMERASE"/>
    <property type="match status" value="1"/>
</dbReference>
<dbReference type="Pfam" id="PF00977">
    <property type="entry name" value="His_biosynth"/>
    <property type="match status" value="1"/>
</dbReference>
<dbReference type="SUPFAM" id="SSF51366">
    <property type="entry name" value="Ribulose-phoshate binding barrel"/>
    <property type="match status" value="1"/>
</dbReference>
<proteinExistence type="inferred from homology"/>
<gene>
    <name evidence="1" type="primary">hisA</name>
    <name type="ordered locus">Cyan7425_2496</name>
</gene>
<name>HIS4_CYAP4</name>
<organism>
    <name type="scientific">Cyanothece sp. (strain PCC 7425 / ATCC 29141)</name>
    <dbReference type="NCBI Taxonomy" id="395961"/>
    <lineage>
        <taxon>Bacteria</taxon>
        <taxon>Bacillati</taxon>
        <taxon>Cyanobacteriota</taxon>
        <taxon>Cyanophyceae</taxon>
        <taxon>Gomontiellales</taxon>
        <taxon>Cyanothecaceae</taxon>
        <taxon>Cyanothece</taxon>
    </lineage>
</organism>